<reference key="1">
    <citation type="journal article" date="1998" name="Genomics">
        <title>The complete mitochondrial DNA sequence of the rabbit, Oryctolagus cuniculus.</title>
        <authorList>
            <person name="Gissi C."/>
            <person name="Gullberg A."/>
            <person name="Arnason U."/>
        </authorList>
    </citation>
    <scope>NUCLEOTIDE SEQUENCE [LARGE SCALE GENOMIC DNA]</scope>
    <source>
        <strain evidence="5">Thorbecke</strain>
    </source>
</reference>
<gene>
    <name type="primary">MT-ND1</name>
    <name type="synonym">MTND1</name>
    <name type="synonym">NADH1</name>
    <name type="synonym">ND1</name>
</gene>
<sequence>MFLINTLLLILPVLLAMAFLTLVERKILGYMQLRKGPNIVGPYGLLQPIADAIKLFTKEPLRPLTSSPLLFIIAPTLALTLALSMWLPIPMPYPLVNLNMGILFILATSSLAVYSILWSGWASNSKYALFGALRAVAQTISYEVTLAIILLCILLMNGSFTLSSLITTQEYMWILLPAWPLAMMWFISTLAETNRAPFDLTEGESELVSGFNVEYAGGPFALFFLAEYTNIILMNALTAILFLGSFHSHTNPEMFTVNFATKTLLLTMTFLWIRASYPRFRYDQLMHLLWKSFLPLTLALCMWHISMPIMLSSIPPQM</sequence>
<proteinExistence type="inferred from homology"/>
<dbReference type="EC" id="7.1.1.2" evidence="1"/>
<dbReference type="EMBL" id="AJ001588">
    <property type="protein sequence ID" value="CAA04847.1"/>
    <property type="molecule type" value="Genomic_DNA"/>
</dbReference>
<dbReference type="PIR" id="T11480">
    <property type="entry name" value="T11480"/>
</dbReference>
<dbReference type="RefSeq" id="NP_007549.1">
    <property type="nucleotide sequence ID" value="NC_001913.1"/>
</dbReference>
<dbReference type="SMR" id="O79427"/>
<dbReference type="FunCoup" id="O79427">
    <property type="interactions" value="94"/>
</dbReference>
<dbReference type="STRING" id="9986.ENSOCUP00000026179"/>
<dbReference type="PaxDb" id="9986-ENSOCUP00000026179"/>
<dbReference type="Ensembl" id="ENSOCUT00000033111.1">
    <property type="protein sequence ID" value="ENSOCUP00000026179.1"/>
    <property type="gene ID" value="ENSOCUG00000029086.1"/>
</dbReference>
<dbReference type="GeneID" id="808226"/>
<dbReference type="KEGG" id="ocu:808226"/>
<dbReference type="CTD" id="4535"/>
<dbReference type="eggNOG" id="KOG4770">
    <property type="taxonomic scope" value="Eukaryota"/>
</dbReference>
<dbReference type="GeneTree" id="ENSGT00390000006621"/>
<dbReference type="HOGENOM" id="CLU_015134_0_1_1"/>
<dbReference type="InParanoid" id="O79427"/>
<dbReference type="OMA" id="WSGWASN"/>
<dbReference type="OrthoDB" id="531329at2759"/>
<dbReference type="TreeFam" id="TF352957"/>
<dbReference type="Proteomes" id="UP000001811">
    <property type="component" value="Mitochondrion"/>
</dbReference>
<dbReference type="Bgee" id="ENSOCUG00000029086">
    <property type="expression patterns" value="Expressed in frontal cortex and 17 other cell types or tissues"/>
</dbReference>
<dbReference type="ExpressionAtlas" id="O79427">
    <property type="expression patterns" value="baseline"/>
</dbReference>
<dbReference type="GO" id="GO:0005743">
    <property type="term" value="C:mitochondrial inner membrane"/>
    <property type="evidence" value="ECO:0000250"/>
    <property type="project" value="UniProtKB"/>
</dbReference>
<dbReference type="GO" id="GO:0045271">
    <property type="term" value="C:respiratory chain complex I"/>
    <property type="evidence" value="ECO:0007669"/>
    <property type="project" value="Ensembl"/>
</dbReference>
<dbReference type="GO" id="GO:0008137">
    <property type="term" value="F:NADH dehydrogenase (ubiquinone) activity"/>
    <property type="evidence" value="ECO:0000250"/>
    <property type="project" value="UniProtKB"/>
</dbReference>
<dbReference type="GO" id="GO:0006120">
    <property type="term" value="P:mitochondrial electron transport, NADH to ubiquinone"/>
    <property type="evidence" value="ECO:0000250"/>
    <property type="project" value="UniProtKB"/>
</dbReference>
<dbReference type="GO" id="GO:0032981">
    <property type="term" value="P:mitochondrial respiratory chain complex I assembly"/>
    <property type="evidence" value="ECO:0000250"/>
    <property type="project" value="UniProtKB"/>
</dbReference>
<dbReference type="HAMAP" id="MF_01350">
    <property type="entry name" value="NDH1_NuoH"/>
    <property type="match status" value="1"/>
</dbReference>
<dbReference type="InterPro" id="IPR001694">
    <property type="entry name" value="NADH_UbQ_OxRdtase_su1/FPO"/>
</dbReference>
<dbReference type="InterPro" id="IPR018086">
    <property type="entry name" value="NADH_UbQ_OxRdtase_su1_CS"/>
</dbReference>
<dbReference type="PANTHER" id="PTHR11432">
    <property type="entry name" value="NADH DEHYDROGENASE SUBUNIT 1"/>
    <property type="match status" value="1"/>
</dbReference>
<dbReference type="PANTHER" id="PTHR11432:SF3">
    <property type="entry name" value="NADH-UBIQUINONE OXIDOREDUCTASE CHAIN 1"/>
    <property type="match status" value="1"/>
</dbReference>
<dbReference type="Pfam" id="PF00146">
    <property type="entry name" value="NADHdh"/>
    <property type="match status" value="1"/>
</dbReference>
<dbReference type="PROSITE" id="PS00667">
    <property type="entry name" value="COMPLEX1_ND1_1"/>
    <property type="match status" value="1"/>
</dbReference>
<dbReference type="PROSITE" id="PS00668">
    <property type="entry name" value="COMPLEX1_ND1_2"/>
    <property type="match status" value="1"/>
</dbReference>
<organism>
    <name type="scientific">Oryctolagus cuniculus</name>
    <name type="common">Rabbit</name>
    <dbReference type="NCBI Taxonomy" id="9986"/>
    <lineage>
        <taxon>Eukaryota</taxon>
        <taxon>Metazoa</taxon>
        <taxon>Chordata</taxon>
        <taxon>Craniata</taxon>
        <taxon>Vertebrata</taxon>
        <taxon>Euteleostomi</taxon>
        <taxon>Mammalia</taxon>
        <taxon>Eutheria</taxon>
        <taxon>Euarchontoglires</taxon>
        <taxon>Glires</taxon>
        <taxon>Lagomorpha</taxon>
        <taxon>Leporidae</taxon>
        <taxon>Oryctolagus</taxon>
    </lineage>
</organism>
<evidence type="ECO:0000250" key="1">
    <source>
        <dbReference type="UniProtKB" id="P03886"/>
    </source>
</evidence>
<evidence type="ECO:0000250" key="2">
    <source>
        <dbReference type="UniProtKB" id="P03887"/>
    </source>
</evidence>
<evidence type="ECO:0000255" key="3"/>
<evidence type="ECO:0000305" key="4"/>
<evidence type="ECO:0000312" key="5">
    <source>
        <dbReference type="Proteomes" id="UP000001811"/>
    </source>
</evidence>
<accession>O79427</accession>
<geneLocation type="mitochondrion"/>
<comment type="function">
    <text evidence="1">Core subunit of the mitochondrial membrane respiratory chain NADH dehydrogenase (Complex I) which catalyzes electron transfer from NADH through the respiratory chain, using ubiquinone as an electron acceptor. Essential for the catalytic activity and assembly of complex I.</text>
</comment>
<comment type="catalytic activity">
    <reaction evidence="1">
        <text>a ubiquinone + NADH + 5 H(+)(in) = a ubiquinol + NAD(+) + 4 H(+)(out)</text>
        <dbReference type="Rhea" id="RHEA:29091"/>
        <dbReference type="Rhea" id="RHEA-COMP:9565"/>
        <dbReference type="Rhea" id="RHEA-COMP:9566"/>
        <dbReference type="ChEBI" id="CHEBI:15378"/>
        <dbReference type="ChEBI" id="CHEBI:16389"/>
        <dbReference type="ChEBI" id="CHEBI:17976"/>
        <dbReference type="ChEBI" id="CHEBI:57540"/>
        <dbReference type="ChEBI" id="CHEBI:57945"/>
        <dbReference type="EC" id="7.1.1.2"/>
    </reaction>
</comment>
<comment type="subunit">
    <text evidence="2">Core subunit of respiratory chain NADH dehydrogenase (Complex I) which is composed of 45 different subunits.</text>
</comment>
<comment type="subcellular location">
    <subcellularLocation>
        <location evidence="2">Mitochondrion inner membrane</location>
        <topology evidence="3">Multi-pass membrane protein</topology>
    </subcellularLocation>
</comment>
<comment type="similarity">
    <text evidence="4">Belongs to the complex I subunit 1 family.</text>
</comment>
<feature type="chain" id="PRO_0000117466" description="NADH-ubiquinone oxidoreductase chain 1">
    <location>
        <begin position="1"/>
        <end position="318"/>
    </location>
</feature>
<feature type="transmembrane region" description="Helical" evidence="3">
    <location>
        <begin position="2"/>
        <end position="22"/>
    </location>
</feature>
<feature type="transmembrane region" description="Helical" evidence="3">
    <location>
        <begin position="69"/>
        <end position="89"/>
    </location>
</feature>
<feature type="transmembrane region" description="Helical" evidence="3">
    <location>
        <begin position="102"/>
        <end position="122"/>
    </location>
</feature>
<feature type="transmembrane region" description="Helical" evidence="3">
    <location>
        <begin position="146"/>
        <end position="166"/>
    </location>
</feature>
<feature type="transmembrane region" description="Helical" evidence="3">
    <location>
        <begin position="171"/>
        <end position="191"/>
    </location>
</feature>
<feature type="transmembrane region" description="Helical" evidence="3">
    <location>
        <begin position="222"/>
        <end position="242"/>
    </location>
</feature>
<feature type="transmembrane region" description="Helical" evidence="3">
    <location>
        <begin position="253"/>
        <end position="273"/>
    </location>
</feature>
<feature type="transmembrane region" description="Helical" evidence="3">
    <location>
        <begin position="294"/>
        <end position="314"/>
    </location>
</feature>
<keyword id="KW-0249">Electron transport</keyword>
<keyword id="KW-0472">Membrane</keyword>
<keyword id="KW-0496">Mitochondrion</keyword>
<keyword id="KW-0999">Mitochondrion inner membrane</keyword>
<keyword id="KW-0520">NAD</keyword>
<keyword id="KW-1185">Reference proteome</keyword>
<keyword id="KW-0679">Respiratory chain</keyword>
<keyword id="KW-1278">Translocase</keyword>
<keyword id="KW-0812">Transmembrane</keyword>
<keyword id="KW-1133">Transmembrane helix</keyword>
<keyword id="KW-0813">Transport</keyword>
<keyword id="KW-0830">Ubiquinone</keyword>
<name>NU1M_RABIT</name>
<protein>
    <recommendedName>
        <fullName>NADH-ubiquinone oxidoreductase chain 1</fullName>
        <ecNumber evidence="1">7.1.1.2</ecNumber>
    </recommendedName>
    <alternativeName>
        <fullName>NADH dehydrogenase subunit 1</fullName>
    </alternativeName>
</protein>